<proteinExistence type="inferred from homology"/>
<gene>
    <name evidence="1" type="primary">bioB</name>
    <name type="ordered locus">FTL_1272</name>
</gene>
<evidence type="ECO:0000255" key="1">
    <source>
        <dbReference type="HAMAP-Rule" id="MF_01694"/>
    </source>
</evidence>
<evidence type="ECO:0000255" key="2">
    <source>
        <dbReference type="PROSITE-ProRule" id="PRU01266"/>
    </source>
</evidence>
<keyword id="KW-0001">2Fe-2S</keyword>
<keyword id="KW-0004">4Fe-4S</keyword>
<keyword id="KW-0093">Biotin biosynthesis</keyword>
<keyword id="KW-0408">Iron</keyword>
<keyword id="KW-0411">Iron-sulfur</keyword>
<keyword id="KW-0479">Metal-binding</keyword>
<keyword id="KW-1185">Reference proteome</keyword>
<keyword id="KW-0949">S-adenosyl-L-methionine</keyword>
<keyword id="KW-0808">Transferase</keyword>
<feature type="chain" id="PRO_0000381393" description="Biotin synthase">
    <location>
        <begin position="1"/>
        <end position="313"/>
    </location>
</feature>
<feature type="domain" description="Radical SAM core" evidence="2">
    <location>
        <begin position="28"/>
        <end position="258"/>
    </location>
</feature>
<feature type="binding site" evidence="1">
    <location>
        <position position="46"/>
    </location>
    <ligand>
        <name>[4Fe-4S] cluster</name>
        <dbReference type="ChEBI" id="CHEBI:49883"/>
        <note>4Fe-4S-S-AdoMet</note>
    </ligand>
</feature>
<feature type="binding site" evidence="1">
    <location>
        <position position="50"/>
    </location>
    <ligand>
        <name>[4Fe-4S] cluster</name>
        <dbReference type="ChEBI" id="CHEBI:49883"/>
        <note>4Fe-4S-S-AdoMet</note>
    </ligand>
</feature>
<feature type="binding site" evidence="1">
    <location>
        <position position="53"/>
    </location>
    <ligand>
        <name>[4Fe-4S] cluster</name>
        <dbReference type="ChEBI" id="CHEBI:49883"/>
        <note>4Fe-4S-S-AdoMet</note>
    </ligand>
</feature>
<feature type="binding site" evidence="1">
    <location>
        <position position="90"/>
    </location>
    <ligand>
        <name>[2Fe-2S] cluster</name>
        <dbReference type="ChEBI" id="CHEBI:190135"/>
    </ligand>
</feature>
<feature type="binding site" evidence="1">
    <location>
        <position position="121"/>
    </location>
    <ligand>
        <name>[2Fe-2S] cluster</name>
        <dbReference type="ChEBI" id="CHEBI:190135"/>
    </ligand>
</feature>
<feature type="binding site" evidence="1">
    <location>
        <position position="181"/>
    </location>
    <ligand>
        <name>[2Fe-2S] cluster</name>
        <dbReference type="ChEBI" id="CHEBI:190135"/>
    </ligand>
</feature>
<feature type="binding site" evidence="1">
    <location>
        <position position="256"/>
    </location>
    <ligand>
        <name>[2Fe-2S] cluster</name>
        <dbReference type="ChEBI" id="CHEBI:190135"/>
    </ligand>
</feature>
<accession>Q2A2V9</accession>
<protein>
    <recommendedName>
        <fullName evidence="1">Biotin synthase</fullName>
        <ecNumber evidence="1">2.8.1.6</ecNumber>
    </recommendedName>
</protein>
<name>BIOB_FRATH</name>
<comment type="function">
    <text evidence="1">Catalyzes the conversion of dethiobiotin (DTB) to biotin by the insertion of a sulfur atom into dethiobiotin via a radical-based mechanism.</text>
</comment>
<comment type="catalytic activity">
    <reaction evidence="1">
        <text>(4R,5S)-dethiobiotin + (sulfur carrier)-SH + 2 reduced [2Fe-2S]-[ferredoxin] + 2 S-adenosyl-L-methionine = (sulfur carrier)-H + biotin + 2 5'-deoxyadenosine + 2 L-methionine + 2 oxidized [2Fe-2S]-[ferredoxin]</text>
        <dbReference type="Rhea" id="RHEA:22060"/>
        <dbReference type="Rhea" id="RHEA-COMP:10000"/>
        <dbReference type="Rhea" id="RHEA-COMP:10001"/>
        <dbReference type="Rhea" id="RHEA-COMP:14737"/>
        <dbReference type="Rhea" id="RHEA-COMP:14739"/>
        <dbReference type="ChEBI" id="CHEBI:17319"/>
        <dbReference type="ChEBI" id="CHEBI:29917"/>
        <dbReference type="ChEBI" id="CHEBI:33737"/>
        <dbReference type="ChEBI" id="CHEBI:33738"/>
        <dbReference type="ChEBI" id="CHEBI:57586"/>
        <dbReference type="ChEBI" id="CHEBI:57844"/>
        <dbReference type="ChEBI" id="CHEBI:59789"/>
        <dbReference type="ChEBI" id="CHEBI:64428"/>
        <dbReference type="ChEBI" id="CHEBI:149473"/>
        <dbReference type="EC" id="2.8.1.6"/>
    </reaction>
</comment>
<comment type="cofactor">
    <cofactor evidence="1">
        <name>[4Fe-4S] cluster</name>
        <dbReference type="ChEBI" id="CHEBI:49883"/>
    </cofactor>
    <text evidence="1">Binds 1 [4Fe-4S] cluster. The cluster is coordinated with 3 cysteines and an exchangeable S-adenosyl-L-methionine.</text>
</comment>
<comment type="cofactor">
    <cofactor evidence="1">
        <name>[2Fe-2S] cluster</name>
        <dbReference type="ChEBI" id="CHEBI:190135"/>
    </cofactor>
    <text evidence="1">Binds 1 [2Fe-2S] cluster. The cluster is coordinated with 3 cysteines and 1 arginine.</text>
</comment>
<comment type="pathway">
    <text evidence="1">Cofactor biosynthesis; biotin biosynthesis; biotin from 7,8-diaminononanoate: step 2/2.</text>
</comment>
<comment type="subunit">
    <text evidence="1">Homodimer.</text>
</comment>
<comment type="similarity">
    <text evidence="1">Belongs to the radical SAM superfamily. Biotin synthase family.</text>
</comment>
<reference key="1">
    <citation type="submission" date="2006-03" db="EMBL/GenBank/DDBJ databases">
        <title>Complete genome sequence of Francisella tularensis LVS (Live Vaccine Strain).</title>
        <authorList>
            <person name="Chain P."/>
            <person name="Larimer F."/>
            <person name="Land M."/>
            <person name="Stilwagen S."/>
            <person name="Larsson P."/>
            <person name="Bearden S."/>
            <person name="Chu M."/>
            <person name="Oyston P."/>
            <person name="Forsman M."/>
            <person name="Andersson S."/>
            <person name="Lindler L."/>
            <person name="Titball R."/>
            <person name="Garcia E."/>
        </authorList>
    </citation>
    <scope>NUCLEOTIDE SEQUENCE [LARGE SCALE GENOMIC DNA]</scope>
    <source>
        <strain>LVS</strain>
    </source>
</reference>
<dbReference type="EC" id="2.8.1.6" evidence="1"/>
<dbReference type="EMBL" id="AM233362">
    <property type="protein sequence ID" value="CAJ79711.1"/>
    <property type="molecule type" value="Genomic_DNA"/>
</dbReference>
<dbReference type="RefSeq" id="WP_003016407.1">
    <property type="nucleotide sequence ID" value="NZ_CP009694.1"/>
</dbReference>
<dbReference type="SMR" id="Q2A2V9"/>
<dbReference type="KEGG" id="ftl:FTL_1272"/>
<dbReference type="UniPathway" id="UPA00078">
    <property type="reaction ID" value="UER00162"/>
</dbReference>
<dbReference type="Proteomes" id="UP000001944">
    <property type="component" value="Chromosome"/>
</dbReference>
<dbReference type="GO" id="GO:0051537">
    <property type="term" value="F:2 iron, 2 sulfur cluster binding"/>
    <property type="evidence" value="ECO:0007669"/>
    <property type="project" value="UniProtKB-KW"/>
</dbReference>
<dbReference type="GO" id="GO:0051539">
    <property type="term" value="F:4 iron, 4 sulfur cluster binding"/>
    <property type="evidence" value="ECO:0007669"/>
    <property type="project" value="UniProtKB-KW"/>
</dbReference>
<dbReference type="GO" id="GO:0004076">
    <property type="term" value="F:biotin synthase activity"/>
    <property type="evidence" value="ECO:0007669"/>
    <property type="project" value="UniProtKB-UniRule"/>
</dbReference>
<dbReference type="GO" id="GO:0005506">
    <property type="term" value="F:iron ion binding"/>
    <property type="evidence" value="ECO:0007669"/>
    <property type="project" value="UniProtKB-UniRule"/>
</dbReference>
<dbReference type="GO" id="GO:0009102">
    <property type="term" value="P:biotin biosynthetic process"/>
    <property type="evidence" value="ECO:0007669"/>
    <property type="project" value="UniProtKB-UniRule"/>
</dbReference>
<dbReference type="CDD" id="cd01335">
    <property type="entry name" value="Radical_SAM"/>
    <property type="match status" value="1"/>
</dbReference>
<dbReference type="Gene3D" id="3.20.20.70">
    <property type="entry name" value="Aldolase class I"/>
    <property type="match status" value="1"/>
</dbReference>
<dbReference type="HAMAP" id="MF_01694">
    <property type="entry name" value="BioB"/>
    <property type="match status" value="1"/>
</dbReference>
<dbReference type="InterPro" id="IPR013785">
    <property type="entry name" value="Aldolase_TIM"/>
</dbReference>
<dbReference type="InterPro" id="IPR010722">
    <property type="entry name" value="BATS_dom"/>
</dbReference>
<dbReference type="InterPro" id="IPR002684">
    <property type="entry name" value="Biotin_synth/BioAB"/>
</dbReference>
<dbReference type="InterPro" id="IPR024177">
    <property type="entry name" value="Biotin_synthase"/>
</dbReference>
<dbReference type="InterPro" id="IPR006638">
    <property type="entry name" value="Elp3/MiaA/NifB-like_rSAM"/>
</dbReference>
<dbReference type="InterPro" id="IPR007197">
    <property type="entry name" value="rSAM"/>
</dbReference>
<dbReference type="NCBIfam" id="TIGR00433">
    <property type="entry name" value="bioB"/>
    <property type="match status" value="1"/>
</dbReference>
<dbReference type="PANTHER" id="PTHR22976">
    <property type="entry name" value="BIOTIN SYNTHASE"/>
    <property type="match status" value="1"/>
</dbReference>
<dbReference type="PANTHER" id="PTHR22976:SF2">
    <property type="entry name" value="BIOTIN SYNTHASE, MITOCHONDRIAL"/>
    <property type="match status" value="1"/>
</dbReference>
<dbReference type="Pfam" id="PF06968">
    <property type="entry name" value="BATS"/>
    <property type="match status" value="1"/>
</dbReference>
<dbReference type="Pfam" id="PF04055">
    <property type="entry name" value="Radical_SAM"/>
    <property type="match status" value="1"/>
</dbReference>
<dbReference type="PIRSF" id="PIRSF001619">
    <property type="entry name" value="Biotin_synth"/>
    <property type="match status" value="1"/>
</dbReference>
<dbReference type="SFLD" id="SFLDF00272">
    <property type="entry name" value="biotin_synthase"/>
    <property type="match status" value="1"/>
</dbReference>
<dbReference type="SFLD" id="SFLDS00029">
    <property type="entry name" value="Radical_SAM"/>
    <property type="match status" value="1"/>
</dbReference>
<dbReference type="SMART" id="SM00876">
    <property type="entry name" value="BATS"/>
    <property type="match status" value="1"/>
</dbReference>
<dbReference type="SMART" id="SM00729">
    <property type="entry name" value="Elp3"/>
    <property type="match status" value="1"/>
</dbReference>
<dbReference type="SUPFAM" id="SSF102114">
    <property type="entry name" value="Radical SAM enzymes"/>
    <property type="match status" value="1"/>
</dbReference>
<dbReference type="PROSITE" id="PS51918">
    <property type="entry name" value="RADICAL_SAM"/>
    <property type="match status" value="1"/>
</dbReference>
<sequence length="313" mass="34906">MTLQQIKEIYLRPLTELILKALEIHNKNFGNDIELCSLKSIKTGTCPEDCKYCPQSGHYNTSIEKHKLLDKDSILAEAKNAKDAGSKRFCMGAAWKHIPKKDFDQVAEIITEVKNLGLETCVTLGSINADEATKLKQAGLDYYNHNLDTSREFYPEIITTRKFEERIETIRNVANANINVCCGGILGMGESLDDRFNLLLELLQLPAAPKSIPINTLIPVKGTPLGDKYTNAQIDSFELVRFIATTRILFPQARLRLSAGRENMSLETQTLCFLAGINSIFYGNKLLTENNATVNSDNFLLAKLGLKSNAELC</sequence>
<organism>
    <name type="scientific">Francisella tularensis subsp. holarctica (strain LVS)</name>
    <dbReference type="NCBI Taxonomy" id="376619"/>
    <lineage>
        <taxon>Bacteria</taxon>
        <taxon>Pseudomonadati</taxon>
        <taxon>Pseudomonadota</taxon>
        <taxon>Gammaproteobacteria</taxon>
        <taxon>Thiotrichales</taxon>
        <taxon>Francisellaceae</taxon>
        <taxon>Francisella</taxon>
    </lineage>
</organism>